<proteinExistence type="predicted"/>
<evidence type="ECO:0000256" key="1">
    <source>
        <dbReference type="SAM" id="MobiDB-lite"/>
    </source>
</evidence>
<keyword id="KW-1185">Reference proteome</keyword>
<accession>P54568</accession>
<gene>
    <name type="primary">yqkE</name>
    <name type="ordered locus">BSU23630</name>
</gene>
<protein>
    <recommendedName>
        <fullName>Uncharacterized protein YqkE</fullName>
    </recommendedName>
</protein>
<feature type="chain" id="PRO_0000049842" description="Uncharacterized protein YqkE">
    <location>
        <begin position="1"/>
        <end position="74"/>
    </location>
</feature>
<feature type="region of interest" description="Disordered" evidence="1">
    <location>
        <begin position="1"/>
        <end position="74"/>
    </location>
</feature>
<feature type="compositionally biased region" description="Basic and acidic residues" evidence="1">
    <location>
        <begin position="1"/>
        <end position="13"/>
    </location>
</feature>
<feature type="compositionally biased region" description="Basic and acidic residues" evidence="1">
    <location>
        <begin position="20"/>
        <end position="60"/>
    </location>
</feature>
<feature type="compositionally biased region" description="Polar residues" evidence="1">
    <location>
        <begin position="64"/>
        <end position="74"/>
    </location>
</feature>
<organism>
    <name type="scientific">Bacillus subtilis (strain 168)</name>
    <dbReference type="NCBI Taxonomy" id="224308"/>
    <lineage>
        <taxon>Bacteria</taxon>
        <taxon>Bacillati</taxon>
        <taxon>Bacillota</taxon>
        <taxon>Bacilli</taxon>
        <taxon>Bacillales</taxon>
        <taxon>Bacillaceae</taxon>
        <taxon>Bacillus</taxon>
    </lineage>
</organism>
<dbReference type="EMBL" id="D84432">
    <property type="protein sequence ID" value="BAA12637.1"/>
    <property type="molecule type" value="Genomic_DNA"/>
</dbReference>
<dbReference type="EMBL" id="AL009126">
    <property type="protein sequence ID" value="CAB14295.1"/>
    <property type="molecule type" value="Genomic_DNA"/>
</dbReference>
<dbReference type="PIR" id="G69966">
    <property type="entry name" value="G69966"/>
</dbReference>
<dbReference type="RefSeq" id="NP_390244.1">
    <property type="nucleotide sequence ID" value="NC_000964.3"/>
</dbReference>
<dbReference type="RefSeq" id="WP_010886561.1">
    <property type="nucleotide sequence ID" value="NZ_OZ025638.1"/>
</dbReference>
<dbReference type="SMR" id="P54568"/>
<dbReference type="FunCoup" id="P54568">
    <property type="interactions" value="76"/>
</dbReference>
<dbReference type="PaxDb" id="224308-BSU23630"/>
<dbReference type="EnsemblBacteria" id="CAB14295">
    <property type="protein sequence ID" value="CAB14295"/>
    <property type="gene ID" value="BSU_23630"/>
</dbReference>
<dbReference type="GeneID" id="938715"/>
<dbReference type="KEGG" id="bsu:BSU23630"/>
<dbReference type="PATRIC" id="fig|224308.179.peg.2576"/>
<dbReference type="eggNOG" id="ENOG5030CDC">
    <property type="taxonomic scope" value="Bacteria"/>
</dbReference>
<dbReference type="InParanoid" id="P54568"/>
<dbReference type="OrthoDB" id="2942756at2"/>
<dbReference type="BioCyc" id="BSUB:BSU23630-MONOMER"/>
<dbReference type="Proteomes" id="UP000001570">
    <property type="component" value="Chromosome"/>
</dbReference>
<dbReference type="InterPro" id="IPR024980">
    <property type="entry name" value="DUF3886"/>
</dbReference>
<dbReference type="Pfam" id="PF13025">
    <property type="entry name" value="DUF3886"/>
    <property type="match status" value="1"/>
</dbReference>
<name>YQKE_BACSU</name>
<reference key="1">
    <citation type="journal article" date="1996" name="Microbiology">
        <title>Systematic sequencing of the 283 kb 210 degrees-232 degrees region of the Bacillus subtilis genome containing the skin element and many sporulation genes.</title>
        <authorList>
            <person name="Mizuno M."/>
            <person name="Masuda S."/>
            <person name="Takemaru K."/>
            <person name="Hosono S."/>
            <person name="Sato T."/>
            <person name="Takeuchi M."/>
            <person name="Kobayashi Y."/>
        </authorList>
    </citation>
    <scope>NUCLEOTIDE SEQUENCE [GENOMIC DNA]</scope>
    <source>
        <strain>168 / JH642</strain>
    </source>
</reference>
<reference key="2">
    <citation type="journal article" date="1997" name="Nature">
        <title>The complete genome sequence of the Gram-positive bacterium Bacillus subtilis.</title>
        <authorList>
            <person name="Kunst F."/>
            <person name="Ogasawara N."/>
            <person name="Moszer I."/>
            <person name="Albertini A.M."/>
            <person name="Alloni G."/>
            <person name="Azevedo V."/>
            <person name="Bertero M.G."/>
            <person name="Bessieres P."/>
            <person name="Bolotin A."/>
            <person name="Borchert S."/>
            <person name="Borriss R."/>
            <person name="Boursier L."/>
            <person name="Brans A."/>
            <person name="Braun M."/>
            <person name="Brignell S.C."/>
            <person name="Bron S."/>
            <person name="Brouillet S."/>
            <person name="Bruschi C.V."/>
            <person name="Caldwell B."/>
            <person name="Capuano V."/>
            <person name="Carter N.M."/>
            <person name="Choi S.-K."/>
            <person name="Codani J.-J."/>
            <person name="Connerton I.F."/>
            <person name="Cummings N.J."/>
            <person name="Daniel R.A."/>
            <person name="Denizot F."/>
            <person name="Devine K.M."/>
            <person name="Duesterhoeft A."/>
            <person name="Ehrlich S.D."/>
            <person name="Emmerson P.T."/>
            <person name="Entian K.-D."/>
            <person name="Errington J."/>
            <person name="Fabret C."/>
            <person name="Ferrari E."/>
            <person name="Foulger D."/>
            <person name="Fritz C."/>
            <person name="Fujita M."/>
            <person name="Fujita Y."/>
            <person name="Fuma S."/>
            <person name="Galizzi A."/>
            <person name="Galleron N."/>
            <person name="Ghim S.-Y."/>
            <person name="Glaser P."/>
            <person name="Goffeau A."/>
            <person name="Golightly E.J."/>
            <person name="Grandi G."/>
            <person name="Guiseppi G."/>
            <person name="Guy B.J."/>
            <person name="Haga K."/>
            <person name="Haiech J."/>
            <person name="Harwood C.R."/>
            <person name="Henaut A."/>
            <person name="Hilbert H."/>
            <person name="Holsappel S."/>
            <person name="Hosono S."/>
            <person name="Hullo M.-F."/>
            <person name="Itaya M."/>
            <person name="Jones L.-M."/>
            <person name="Joris B."/>
            <person name="Karamata D."/>
            <person name="Kasahara Y."/>
            <person name="Klaerr-Blanchard M."/>
            <person name="Klein C."/>
            <person name="Kobayashi Y."/>
            <person name="Koetter P."/>
            <person name="Koningstein G."/>
            <person name="Krogh S."/>
            <person name="Kumano M."/>
            <person name="Kurita K."/>
            <person name="Lapidus A."/>
            <person name="Lardinois S."/>
            <person name="Lauber J."/>
            <person name="Lazarevic V."/>
            <person name="Lee S.-M."/>
            <person name="Levine A."/>
            <person name="Liu H."/>
            <person name="Masuda S."/>
            <person name="Mauel C."/>
            <person name="Medigue C."/>
            <person name="Medina N."/>
            <person name="Mellado R.P."/>
            <person name="Mizuno M."/>
            <person name="Moestl D."/>
            <person name="Nakai S."/>
            <person name="Noback M."/>
            <person name="Noone D."/>
            <person name="O'Reilly M."/>
            <person name="Ogawa K."/>
            <person name="Ogiwara A."/>
            <person name="Oudega B."/>
            <person name="Park S.-H."/>
            <person name="Parro V."/>
            <person name="Pohl T.M."/>
            <person name="Portetelle D."/>
            <person name="Porwollik S."/>
            <person name="Prescott A.M."/>
            <person name="Presecan E."/>
            <person name="Pujic P."/>
            <person name="Purnelle B."/>
            <person name="Rapoport G."/>
            <person name="Rey M."/>
            <person name="Reynolds S."/>
            <person name="Rieger M."/>
            <person name="Rivolta C."/>
            <person name="Rocha E."/>
            <person name="Roche B."/>
            <person name="Rose M."/>
            <person name="Sadaie Y."/>
            <person name="Sato T."/>
            <person name="Scanlan E."/>
            <person name="Schleich S."/>
            <person name="Schroeter R."/>
            <person name="Scoffone F."/>
            <person name="Sekiguchi J."/>
            <person name="Sekowska A."/>
            <person name="Seror S.J."/>
            <person name="Serror P."/>
            <person name="Shin B.-S."/>
            <person name="Soldo B."/>
            <person name="Sorokin A."/>
            <person name="Tacconi E."/>
            <person name="Takagi T."/>
            <person name="Takahashi H."/>
            <person name="Takemaru K."/>
            <person name="Takeuchi M."/>
            <person name="Tamakoshi A."/>
            <person name="Tanaka T."/>
            <person name="Terpstra P."/>
            <person name="Tognoni A."/>
            <person name="Tosato V."/>
            <person name="Uchiyama S."/>
            <person name="Vandenbol M."/>
            <person name="Vannier F."/>
            <person name="Vassarotti A."/>
            <person name="Viari A."/>
            <person name="Wambutt R."/>
            <person name="Wedler E."/>
            <person name="Wedler H."/>
            <person name="Weitzenegger T."/>
            <person name="Winters P."/>
            <person name="Wipat A."/>
            <person name="Yamamoto H."/>
            <person name="Yamane K."/>
            <person name="Yasumoto K."/>
            <person name="Yata K."/>
            <person name="Yoshida K."/>
            <person name="Yoshikawa H.-F."/>
            <person name="Zumstein E."/>
            <person name="Yoshikawa H."/>
            <person name="Danchin A."/>
        </authorList>
    </citation>
    <scope>NUCLEOTIDE SEQUENCE [LARGE SCALE GENOMIC DNA]</scope>
    <source>
        <strain>168</strain>
    </source>
</reference>
<sequence length="74" mass="9104">MKKQKSIDKHQLKDGLQSDIKAKLMEMKSQLKEEDEKRQKREKAEQIRKKKEIEKNKSFEELLNESQMDWHQYK</sequence>